<dbReference type="EC" id="3.2.2.23" evidence="2"/>
<dbReference type="EC" id="4.2.99.18" evidence="2"/>
<dbReference type="EMBL" id="CP001657">
    <property type="protein sequence ID" value="ACT15112.1"/>
    <property type="molecule type" value="Genomic_DNA"/>
</dbReference>
<dbReference type="RefSeq" id="WP_015842188.1">
    <property type="nucleotide sequence ID" value="NC_012917.1"/>
</dbReference>
<dbReference type="SMR" id="C6DIB8"/>
<dbReference type="STRING" id="561230.PC1_4097"/>
<dbReference type="KEGG" id="pct:PC1_4097"/>
<dbReference type="eggNOG" id="COG0266">
    <property type="taxonomic scope" value="Bacteria"/>
</dbReference>
<dbReference type="HOGENOM" id="CLU_038423_1_1_6"/>
<dbReference type="OrthoDB" id="9800855at2"/>
<dbReference type="Proteomes" id="UP000002736">
    <property type="component" value="Chromosome"/>
</dbReference>
<dbReference type="GO" id="GO:0034039">
    <property type="term" value="F:8-oxo-7,8-dihydroguanine DNA N-glycosylase activity"/>
    <property type="evidence" value="ECO:0007669"/>
    <property type="project" value="TreeGrafter"/>
</dbReference>
<dbReference type="GO" id="GO:0140078">
    <property type="term" value="F:class I DNA-(apurinic or apyrimidinic site) endonuclease activity"/>
    <property type="evidence" value="ECO:0007669"/>
    <property type="project" value="UniProtKB-EC"/>
</dbReference>
<dbReference type="GO" id="GO:0003684">
    <property type="term" value="F:damaged DNA binding"/>
    <property type="evidence" value="ECO:0007669"/>
    <property type="project" value="InterPro"/>
</dbReference>
<dbReference type="GO" id="GO:0008270">
    <property type="term" value="F:zinc ion binding"/>
    <property type="evidence" value="ECO:0007669"/>
    <property type="project" value="UniProtKB-UniRule"/>
</dbReference>
<dbReference type="GO" id="GO:0006284">
    <property type="term" value="P:base-excision repair"/>
    <property type="evidence" value="ECO:0007669"/>
    <property type="project" value="InterPro"/>
</dbReference>
<dbReference type="CDD" id="cd08966">
    <property type="entry name" value="EcFpg-like_N"/>
    <property type="match status" value="1"/>
</dbReference>
<dbReference type="FunFam" id="1.10.8.50:FF:000003">
    <property type="entry name" value="Formamidopyrimidine-DNA glycosylase"/>
    <property type="match status" value="1"/>
</dbReference>
<dbReference type="FunFam" id="3.20.190.10:FF:000001">
    <property type="entry name" value="Formamidopyrimidine-DNA glycosylase"/>
    <property type="match status" value="1"/>
</dbReference>
<dbReference type="Gene3D" id="1.10.8.50">
    <property type="match status" value="1"/>
</dbReference>
<dbReference type="Gene3D" id="3.20.190.10">
    <property type="entry name" value="MutM-like, N-terminal"/>
    <property type="match status" value="1"/>
</dbReference>
<dbReference type="HAMAP" id="MF_00103">
    <property type="entry name" value="Fapy_DNA_glycosyl"/>
    <property type="match status" value="1"/>
</dbReference>
<dbReference type="InterPro" id="IPR015886">
    <property type="entry name" value="DNA_glyclase/AP_lyase_DNA-bd"/>
</dbReference>
<dbReference type="InterPro" id="IPR015887">
    <property type="entry name" value="DNA_glyclase_Znf_dom_DNA_BS"/>
</dbReference>
<dbReference type="InterPro" id="IPR020629">
    <property type="entry name" value="Formamido-pyr_DNA_Glyclase"/>
</dbReference>
<dbReference type="InterPro" id="IPR012319">
    <property type="entry name" value="FPG_cat"/>
</dbReference>
<dbReference type="InterPro" id="IPR035937">
    <property type="entry name" value="MutM-like_N-ter"/>
</dbReference>
<dbReference type="InterPro" id="IPR010979">
    <property type="entry name" value="Ribosomal_uS13-like_H2TH"/>
</dbReference>
<dbReference type="InterPro" id="IPR000214">
    <property type="entry name" value="Znf_DNA_glyclase/AP_lyase"/>
</dbReference>
<dbReference type="InterPro" id="IPR010663">
    <property type="entry name" value="Znf_FPG/IleRS"/>
</dbReference>
<dbReference type="NCBIfam" id="TIGR00577">
    <property type="entry name" value="fpg"/>
    <property type="match status" value="1"/>
</dbReference>
<dbReference type="NCBIfam" id="NF002211">
    <property type="entry name" value="PRK01103.1"/>
    <property type="match status" value="1"/>
</dbReference>
<dbReference type="PANTHER" id="PTHR22993">
    <property type="entry name" value="FORMAMIDOPYRIMIDINE-DNA GLYCOSYLASE"/>
    <property type="match status" value="1"/>
</dbReference>
<dbReference type="PANTHER" id="PTHR22993:SF9">
    <property type="entry name" value="FORMAMIDOPYRIMIDINE-DNA GLYCOSYLASE"/>
    <property type="match status" value="1"/>
</dbReference>
<dbReference type="Pfam" id="PF01149">
    <property type="entry name" value="Fapy_DNA_glyco"/>
    <property type="match status" value="1"/>
</dbReference>
<dbReference type="Pfam" id="PF06831">
    <property type="entry name" value="H2TH"/>
    <property type="match status" value="1"/>
</dbReference>
<dbReference type="Pfam" id="PF06827">
    <property type="entry name" value="zf-FPG_IleRS"/>
    <property type="match status" value="1"/>
</dbReference>
<dbReference type="SMART" id="SM00898">
    <property type="entry name" value="Fapy_DNA_glyco"/>
    <property type="match status" value="1"/>
</dbReference>
<dbReference type="SMART" id="SM01232">
    <property type="entry name" value="H2TH"/>
    <property type="match status" value="1"/>
</dbReference>
<dbReference type="SUPFAM" id="SSF57716">
    <property type="entry name" value="Glucocorticoid receptor-like (DNA-binding domain)"/>
    <property type="match status" value="1"/>
</dbReference>
<dbReference type="SUPFAM" id="SSF81624">
    <property type="entry name" value="N-terminal domain of MutM-like DNA repair proteins"/>
    <property type="match status" value="1"/>
</dbReference>
<dbReference type="SUPFAM" id="SSF46946">
    <property type="entry name" value="S13-like H2TH domain"/>
    <property type="match status" value="1"/>
</dbReference>
<dbReference type="PROSITE" id="PS51068">
    <property type="entry name" value="FPG_CAT"/>
    <property type="match status" value="1"/>
</dbReference>
<dbReference type="PROSITE" id="PS01242">
    <property type="entry name" value="ZF_FPG_1"/>
    <property type="match status" value="1"/>
</dbReference>
<dbReference type="PROSITE" id="PS51066">
    <property type="entry name" value="ZF_FPG_2"/>
    <property type="match status" value="1"/>
</dbReference>
<proteinExistence type="inferred from homology"/>
<protein>
    <recommendedName>
        <fullName evidence="2">Formamidopyrimidine-DNA glycosylase</fullName>
        <shortName evidence="2">Fapy-DNA glycosylase</shortName>
        <ecNumber evidence="2">3.2.2.23</ecNumber>
    </recommendedName>
    <alternativeName>
        <fullName evidence="2">DNA-(apurinic or apyrimidinic site) lyase MutM</fullName>
        <shortName evidence="2">AP lyase MutM</shortName>
        <ecNumber evidence="2">4.2.99.18</ecNumber>
    </alternativeName>
</protein>
<organism>
    <name type="scientific">Pectobacterium carotovorum subsp. carotovorum (strain PC1)</name>
    <dbReference type="NCBI Taxonomy" id="561230"/>
    <lineage>
        <taxon>Bacteria</taxon>
        <taxon>Pseudomonadati</taxon>
        <taxon>Pseudomonadota</taxon>
        <taxon>Gammaproteobacteria</taxon>
        <taxon>Enterobacterales</taxon>
        <taxon>Pectobacteriaceae</taxon>
        <taxon>Pectobacterium</taxon>
    </lineage>
</organism>
<feature type="initiator methionine" description="Removed" evidence="1">
    <location>
        <position position="1"/>
    </location>
</feature>
<feature type="chain" id="PRO_1000202826" description="Formamidopyrimidine-DNA glycosylase">
    <location>
        <begin position="2"/>
        <end position="269"/>
    </location>
</feature>
<feature type="zinc finger region" description="FPG-type" evidence="2">
    <location>
        <begin position="235"/>
        <end position="269"/>
    </location>
</feature>
<feature type="active site" description="Schiff-base intermediate with DNA" evidence="2">
    <location>
        <position position="2"/>
    </location>
</feature>
<feature type="active site" description="Proton donor" evidence="2">
    <location>
        <position position="3"/>
    </location>
</feature>
<feature type="active site" description="Proton donor; for beta-elimination activity" evidence="2">
    <location>
        <position position="57"/>
    </location>
</feature>
<feature type="active site" description="Proton donor; for delta-elimination activity" evidence="2">
    <location>
        <position position="259"/>
    </location>
</feature>
<feature type="binding site" evidence="2">
    <location>
        <position position="90"/>
    </location>
    <ligand>
        <name>DNA</name>
        <dbReference type="ChEBI" id="CHEBI:16991"/>
    </ligand>
</feature>
<feature type="binding site" evidence="2">
    <location>
        <position position="109"/>
    </location>
    <ligand>
        <name>DNA</name>
        <dbReference type="ChEBI" id="CHEBI:16991"/>
    </ligand>
</feature>
<feature type="binding site" evidence="2">
    <location>
        <position position="150"/>
    </location>
    <ligand>
        <name>DNA</name>
        <dbReference type="ChEBI" id="CHEBI:16991"/>
    </ligand>
</feature>
<evidence type="ECO:0000250" key="1"/>
<evidence type="ECO:0000255" key="2">
    <source>
        <dbReference type="HAMAP-Rule" id="MF_00103"/>
    </source>
</evidence>
<name>FPG_PECCP</name>
<sequence>MPELPEVETSRRGISPYLVDHTILYAEVRNTRLRWPVSGEILSLSDEPVLSVRRRAKYLLIELTRGWIIVHLGMSGSLRVLPEYSEPEKHDHVDLVMDSGKVLRYTDPRRFGAWLWTDNPETCSVLAHLGPEPLEAEFSADYLYQASRGKKTAIKQWIMDNKVVVGVGNIYASESLFAAGIHPDRAAGSLNENDAAVLVSVIKQVLQLSIEQGGTTLRDFLQSDGKPGYFAQELRVYGRNGEPCRTCGTPIETAKHGQRSTFFCRRCQK</sequence>
<keyword id="KW-0227">DNA damage</keyword>
<keyword id="KW-0234">DNA repair</keyword>
<keyword id="KW-0238">DNA-binding</keyword>
<keyword id="KW-0326">Glycosidase</keyword>
<keyword id="KW-0378">Hydrolase</keyword>
<keyword id="KW-0456">Lyase</keyword>
<keyword id="KW-0479">Metal-binding</keyword>
<keyword id="KW-0511">Multifunctional enzyme</keyword>
<keyword id="KW-0862">Zinc</keyword>
<keyword id="KW-0863">Zinc-finger</keyword>
<gene>
    <name evidence="2" type="primary">mutM</name>
    <name evidence="2" type="synonym">fpg</name>
    <name type="ordered locus">PC1_4097</name>
</gene>
<accession>C6DIB8</accession>
<comment type="function">
    <text evidence="2">Involved in base excision repair of DNA damaged by oxidation or by mutagenic agents. Acts as a DNA glycosylase that recognizes and removes damaged bases. Has a preference for oxidized purines, such as 7,8-dihydro-8-oxoguanine (8-oxoG). Has AP (apurinic/apyrimidinic) lyase activity and introduces nicks in the DNA strand. Cleaves the DNA backbone by beta-delta elimination to generate a single-strand break at the site of the removed base with both 3'- and 5'-phosphates.</text>
</comment>
<comment type="catalytic activity">
    <reaction evidence="2">
        <text>Hydrolysis of DNA containing ring-opened 7-methylguanine residues, releasing 2,6-diamino-4-hydroxy-5-(N-methyl)formamidopyrimidine.</text>
        <dbReference type="EC" id="3.2.2.23"/>
    </reaction>
</comment>
<comment type="catalytic activity">
    <reaction evidence="2">
        <text>2'-deoxyribonucleotide-(2'-deoxyribose 5'-phosphate)-2'-deoxyribonucleotide-DNA = a 3'-end 2'-deoxyribonucleotide-(2,3-dehydro-2,3-deoxyribose 5'-phosphate)-DNA + a 5'-end 5'-phospho-2'-deoxyribonucleoside-DNA + H(+)</text>
        <dbReference type="Rhea" id="RHEA:66592"/>
        <dbReference type="Rhea" id="RHEA-COMP:13180"/>
        <dbReference type="Rhea" id="RHEA-COMP:16897"/>
        <dbReference type="Rhea" id="RHEA-COMP:17067"/>
        <dbReference type="ChEBI" id="CHEBI:15378"/>
        <dbReference type="ChEBI" id="CHEBI:136412"/>
        <dbReference type="ChEBI" id="CHEBI:157695"/>
        <dbReference type="ChEBI" id="CHEBI:167181"/>
        <dbReference type="EC" id="4.2.99.18"/>
    </reaction>
</comment>
<comment type="cofactor">
    <cofactor evidence="2">
        <name>Zn(2+)</name>
        <dbReference type="ChEBI" id="CHEBI:29105"/>
    </cofactor>
    <text evidence="2">Binds 1 zinc ion per subunit.</text>
</comment>
<comment type="subunit">
    <text evidence="2">Monomer.</text>
</comment>
<comment type="similarity">
    <text evidence="2">Belongs to the FPG family.</text>
</comment>
<reference key="1">
    <citation type="submission" date="2009-07" db="EMBL/GenBank/DDBJ databases">
        <title>Complete sequence of Pectobacterium carotovorum subsp. carotovorum PC1.</title>
        <authorList>
            <consortium name="US DOE Joint Genome Institute"/>
            <person name="Lucas S."/>
            <person name="Copeland A."/>
            <person name="Lapidus A."/>
            <person name="Glavina del Rio T."/>
            <person name="Tice H."/>
            <person name="Bruce D."/>
            <person name="Goodwin L."/>
            <person name="Pitluck S."/>
            <person name="Munk A.C."/>
            <person name="Brettin T."/>
            <person name="Detter J.C."/>
            <person name="Han C."/>
            <person name="Tapia R."/>
            <person name="Larimer F."/>
            <person name="Land M."/>
            <person name="Hauser L."/>
            <person name="Kyrpides N."/>
            <person name="Mikhailova N."/>
            <person name="Balakrishnan V."/>
            <person name="Glasner J."/>
            <person name="Perna N.T."/>
        </authorList>
    </citation>
    <scope>NUCLEOTIDE SEQUENCE [LARGE SCALE GENOMIC DNA]</scope>
    <source>
        <strain>PC1</strain>
    </source>
</reference>